<keyword id="KW-0408">Iron</keyword>
<keyword id="KW-0479">Metal-binding</keyword>
<keyword id="KW-1185">Reference proteome</keyword>
<accession>A7MQK4</accession>
<proteinExistence type="inferred from homology"/>
<dbReference type="EMBL" id="CP000783">
    <property type="protein sequence ID" value="ABU78948.1"/>
    <property type="molecule type" value="Genomic_DNA"/>
</dbReference>
<dbReference type="RefSeq" id="WP_007704482.1">
    <property type="nucleotide sequence ID" value="NC_009778.1"/>
</dbReference>
<dbReference type="SMR" id="A7MQK4"/>
<dbReference type="GeneID" id="92808157"/>
<dbReference type="KEGG" id="esa:ESA_03751"/>
<dbReference type="HOGENOM" id="CLU_080880_3_0_6"/>
<dbReference type="Proteomes" id="UP000000260">
    <property type="component" value="Chromosome"/>
</dbReference>
<dbReference type="GO" id="GO:0005829">
    <property type="term" value="C:cytosol"/>
    <property type="evidence" value="ECO:0007669"/>
    <property type="project" value="TreeGrafter"/>
</dbReference>
<dbReference type="GO" id="GO:0008199">
    <property type="term" value="F:ferric iron binding"/>
    <property type="evidence" value="ECO:0007669"/>
    <property type="project" value="InterPro"/>
</dbReference>
<dbReference type="GO" id="GO:0008198">
    <property type="term" value="F:ferrous iron binding"/>
    <property type="evidence" value="ECO:0007669"/>
    <property type="project" value="TreeGrafter"/>
</dbReference>
<dbReference type="GO" id="GO:0016226">
    <property type="term" value="P:iron-sulfur cluster assembly"/>
    <property type="evidence" value="ECO:0007669"/>
    <property type="project" value="UniProtKB-UniRule"/>
</dbReference>
<dbReference type="CDD" id="cd00503">
    <property type="entry name" value="Frataxin"/>
    <property type="match status" value="1"/>
</dbReference>
<dbReference type="FunFam" id="3.30.920.10:FF:000001">
    <property type="entry name" value="Iron-sulfur cluster assembly protein CyaY"/>
    <property type="match status" value="1"/>
</dbReference>
<dbReference type="Gene3D" id="3.30.920.10">
    <property type="entry name" value="Frataxin/CyaY"/>
    <property type="match status" value="1"/>
</dbReference>
<dbReference type="HAMAP" id="MF_00142">
    <property type="entry name" value="CyaY"/>
    <property type="match status" value="1"/>
</dbReference>
<dbReference type="InterPro" id="IPR047584">
    <property type="entry name" value="CyaY"/>
</dbReference>
<dbReference type="InterPro" id="IPR002908">
    <property type="entry name" value="Frataxin/CyaY"/>
</dbReference>
<dbReference type="InterPro" id="IPR036524">
    <property type="entry name" value="Frataxin/CyaY_sf"/>
</dbReference>
<dbReference type="InterPro" id="IPR020895">
    <property type="entry name" value="Frataxin_CS"/>
</dbReference>
<dbReference type="NCBIfam" id="TIGR03421">
    <property type="entry name" value="FeS_CyaY"/>
    <property type="match status" value="1"/>
</dbReference>
<dbReference type="PANTHER" id="PTHR16821">
    <property type="entry name" value="FRATAXIN"/>
    <property type="match status" value="1"/>
</dbReference>
<dbReference type="PANTHER" id="PTHR16821:SF2">
    <property type="entry name" value="FRATAXIN, MITOCHONDRIAL"/>
    <property type="match status" value="1"/>
</dbReference>
<dbReference type="Pfam" id="PF01491">
    <property type="entry name" value="Frataxin_Cyay"/>
    <property type="match status" value="1"/>
</dbReference>
<dbReference type="SMART" id="SM01219">
    <property type="entry name" value="Frataxin_Cyay"/>
    <property type="match status" value="1"/>
</dbReference>
<dbReference type="SUPFAM" id="SSF55387">
    <property type="entry name" value="Frataxin/Nqo15-like"/>
    <property type="match status" value="1"/>
</dbReference>
<dbReference type="PROSITE" id="PS01344">
    <property type="entry name" value="FRATAXIN_1"/>
    <property type="match status" value="1"/>
</dbReference>
<dbReference type="PROSITE" id="PS50810">
    <property type="entry name" value="FRATAXIN_2"/>
    <property type="match status" value="1"/>
</dbReference>
<gene>
    <name evidence="1" type="primary">cyaY</name>
    <name type="ordered locus">ESA_03751</name>
</gene>
<name>CYAY_CROS8</name>
<organism>
    <name type="scientific">Cronobacter sakazakii (strain ATCC BAA-894)</name>
    <name type="common">Enterobacter sakazakii</name>
    <dbReference type="NCBI Taxonomy" id="290339"/>
    <lineage>
        <taxon>Bacteria</taxon>
        <taxon>Pseudomonadati</taxon>
        <taxon>Pseudomonadota</taxon>
        <taxon>Gammaproteobacteria</taxon>
        <taxon>Enterobacterales</taxon>
        <taxon>Enterobacteriaceae</taxon>
        <taxon>Cronobacter</taxon>
    </lineage>
</organism>
<feature type="chain" id="PRO_1000010930" description="Iron-sulfur cluster assembly protein CyaY">
    <location>
        <begin position="1"/>
        <end position="106"/>
    </location>
</feature>
<reference key="1">
    <citation type="journal article" date="2010" name="PLoS ONE">
        <title>Genome sequence of Cronobacter sakazakii BAA-894 and comparative genomic hybridization analysis with other Cronobacter species.</title>
        <authorList>
            <person name="Kucerova E."/>
            <person name="Clifton S.W."/>
            <person name="Xia X.Q."/>
            <person name="Long F."/>
            <person name="Porwollik S."/>
            <person name="Fulton L."/>
            <person name="Fronick C."/>
            <person name="Minx P."/>
            <person name="Kyung K."/>
            <person name="Warren W."/>
            <person name="Fulton R."/>
            <person name="Feng D."/>
            <person name="Wollam A."/>
            <person name="Shah N."/>
            <person name="Bhonagiri V."/>
            <person name="Nash W.E."/>
            <person name="Hallsworth-Pepin K."/>
            <person name="Wilson R.K."/>
            <person name="McClelland M."/>
            <person name="Forsythe S.J."/>
        </authorList>
    </citation>
    <scope>NUCLEOTIDE SEQUENCE [LARGE SCALE GENOMIC DNA]</scope>
    <source>
        <strain>ATCC BAA-894</strain>
    </source>
</reference>
<comment type="function">
    <text evidence="1">Involved in iron-sulfur (Fe-S) cluster assembly. May act as a regulator of Fe-S biogenesis.</text>
</comment>
<comment type="similarity">
    <text evidence="1">Belongs to the frataxin family.</text>
</comment>
<sequence length="106" mass="12225">MNDSEFHRLADGLWMTIEERLDAWDGDSDIDCEINGGVLTLSFENGSKIIINRQEPLHQVWLATKQGGYHFDYKNDEWICDRSGERFWDLLETAATQQAGEAVSFR</sequence>
<protein>
    <recommendedName>
        <fullName evidence="1">Iron-sulfur cluster assembly protein CyaY</fullName>
    </recommendedName>
</protein>
<evidence type="ECO:0000255" key="1">
    <source>
        <dbReference type="HAMAP-Rule" id="MF_00142"/>
    </source>
</evidence>